<keyword id="KW-0028">Amino-acid biosynthesis</keyword>
<keyword id="KW-0057">Aromatic amino acid biosynthesis</keyword>
<keyword id="KW-0456">Lyase</keyword>
<keyword id="KW-0822">Tryptophan biosynthesis</keyword>
<dbReference type="EC" id="4.2.1.20" evidence="1"/>
<dbReference type="EMBL" id="CP000488">
    <property type="protein sequence ID" value="ABL02730.1"/>
    <property type="molecule type" value="Genomic_DNA"/>
</dbReference>
<dbReference type="RefSeq" id="WP_011738355.1">
    <property type="nucleotide sequence ID" value="NC_008610.1"/>
</dbReference>
<dbReference type="SMR" id="A1AXS3"/>
<dbReference type="STRING" id="413404.Rmag_1025"/>
<dbReference type="KEGG" id="rma:Rmag_1025"/>
<dbReference type="eggNOG" id="COG0159">
    <property type="taxonomic scope" value="Bacteria"/>
</dbReference>
<dbReference type="HOGENOM" id="CLU_016734_0_0_6"/>
<dbReference type="OrthoDB" id="9804578at2"/>
<dbReference type="UniPathway" id="UPA00035">
    <property type="reaction ID" value="UER00044"/>
</dbReference>
<dbReference type="Proteomes" id="UP000002587">
    <property type="component" value="Chromosome"/>
</dbReference>
<dbReference type="GO" id="GO:0005829">
    <property type="term" value="C:cytosol"/>
    <property type="evidence" value="ECO:0007669"/>
    <property type="project" value="TreeGrafter"/>
</dbReference>
<dbReference type="GO" id="GO:0004834">
    <property type="term" value="F:tryptophan synthase activity"/>
    <property type="evidence" value="ECO:0007669"/>
    <property type="project" value="UniProtKB-UniRule"/>
</dbReference>
<dbReference type="CDD" id="cd04724">
    <property type="entry name" value="Tryptophan_synthase_alpha"/>
    <property type="match status" value="1"/>
</dbReference>
<dbReference type="FunFam" id="3.20.20.70:FF:000037">
    <property type="entry name" value="Tryptophan synthase alpha chain"/>
    <property type="match status" value="1"/>
</dbReference>
<dbReference type="Gene3D" id="3.20.20.70">
    <property type="entry name" value="Aldolase class I"/>
    <property type="match status" value="1"/>
</dbReference>
<dbReference type="HAMAP" id="MF_00131">
    <property type="entry name" value="Trp_synth_alpha"/>
    <property type="match status" value="1"/>
</dbReference>
<dbReference type="InterPro" id="IPR013785">
    <property type="entry name" value="Aldolase_TIM"/>
</dbReference>
<dbReference type="InterPro" id="IPR011060">
    <property type="entry name" value="RibuloseP-bd_barrel"/>
</dbReference>
<dbReference type="InterPro" id="IPR018204">
    <property type="entry name" value="Trp_synthase_alpha_AS"/>
</dbReference>
<dbReference type="InterPro" id="IPR002028">
    <property type="entry name" value="Trp_synthase_suA"/>
</dbReference>
<dbReference type="NCBIfam" id="TIGR00262">
    <property type="entry name" value="trpA"/>
    <property type="match status" value="1"/>
</dbReference>
<dbReference type="PANTHER" id="PTHR43406:SF1">
    <property type="entry name" value="TRYPTOPHAN SYNTHASE ALPHA CHAIN, CHLOROPLASTIC"/>
    <property type="match status" value="1"/>
</dbReference>
<dbReference type="PANTHER" id="PTHR43406">
    <property type="entry name" value="TRYPTOPHAN SYNTHASE, ALPHA CHAIN"/>
    <property type="match status" value="1"/>
</dbReference>
<dbReference type="Pfam" id="PF00290">
    <property type="entry name" value="Trp_syntA"/>
    <property type="match status" value="1"/>
</dbReference>
<dbReference type="SUPFAM" id="SSF51366">
    <property type="entry name" value="Ribulose-phoshate binding barrel"/>
    <property type="match status" value="1"/>
</dbReference>
<dbReference type="PROSITE" id="PS00167">
    <property type="entry name" value="TRP_SYNTHASE_ALPHA"/>
    <property type="match status" value="1"/>
</dbReference>
<organism>
    <name type="scientific">Ruthia magnifica subsp. Calyptogena magnifica</name>
    <dbReference type="NCBI Taxonomy" id="413404"/>
    <lineage>
        <taxon>Bacteria</taxon>
        <taxon>Pseudomonadati</taxon>
        <taxon>Pseudomonadota</taxon>
        <taxon>Gammaproteobacteria</taxon>
        <taxon>Candidatus Pseudothioglobaceae</taxon>
        <taxon>Candidatus Ruthturnera</taxon>
    </lineage>
</organism>
<reference key="1">
    <citation type="journal article" date="2007" name="Science">
        <title>The Calyptogena magnifica chemoautotrophic symbiont genome.</title>
        <authorList>
            <person name="Newton I.L.G."/>
            <person name="Woyke T."/>
            <person name="Auchtung T.A."/>
            <person name="Dilly G.F."/>
            <person name="Dutton R.J."/>
            <person name="Fisher M.C."/>
            <person name="Fontanez K.M."/>
            <person name="Lau E."/>
            <person name="Stewart F.J."/>
            <person name="Richardson P.M."/>
            <person name="Barry K.W."/>
            <person name="Saunders E."/>
            <person name="Detter J.C."/>
            <person name="Wu D."/>
            <person name="Eisen J.A."/>
            <person name="Cavanaugh C.M."/>
        </authorList>
    </citation>
    <scope>NUCLEOTIDE SEQUENCE [LARGE SCALE GENOMIC DNA]</scope>
</reference>
<evidence type="ECO:0000255" key="1">
    <source>
        <dbReference type="HAMAP-Rule" id="MF_00131"/>
    </source>
</evidence>
<feature type="chain" id="PRO_1000018275" description="Tryptophan synthase alpha chain">
    <location>
        <begin position="1"/>
        <end position="265"/>
    </location>
</feature>
<feature type="active site" description="Proton acceptor" evidence="1">
    <location>
        <position position="48"/>
    </location>
</feature>
<feature type="active site" description="Proton acceptor" evidence="1">
    <location>
        <position position="59"/>
    </location>
</feature>
<comment type="function">
    <text evidence="1">The alpha subunit is responsible for the aldol cleavage of indoleglycerol phosphate to indole and glyceraldehyde 3-phosphate.</text>
</comment>
<comment type="catalytic activity">
    <reaction evidence="1">
        <text>(1S,2R)-1-C-(indol-3-yl)glycerol 3-phosphate + L-serine = D-glyceraldehyde 3-phosphate + L-tryptophan + H2O</text>
        <dbReference type="Rhea" id="RHEA:10532"/>
        <dbReference type="ChEBI" id="CHEBI:15377"/>
        <dbReference type="ChEBI" id="CHEBI:33384"/>
        <dbReference type="ChEBI" id="CHEBI:57912"/>
        <dbReference type="ChEBI" id="CHEBI:58866"/>
        <dbReference type="ChEBI" id="CHEBI:59776"/>
        <dbReference type="EC" id="4.2.1.20"/>
    </reaction>
</comment>
<comment type="pathway">
    <text evidence="1">Amino-acid biosynthesis; L-tryptophan biosynthesis; L-tryptophan from chorismate: step 5/5.</text>
</comment>
<comment type="subunit">
    <text evidence="1">Tetramer of two alpha and two beta chains.</text>
</comment>
<comment type="similarity">
    <text evidence="1">Belongs to the TrpA family.</text>
</comment>
<name>TRPA_RUTMC</name>
<gene>
    <name evidence="1" type="primary">trpA</name>
    <name type="ordered locus">Rmag_1025</name>
</gene>
<proteinExistence type="inferred from homology"/>
<sequence>MSRLSTIFTQLPVGKKVFIPFITAGDSGLDNTFELMQVLVKNGADVIELGVPFSDPIADGPIIAKSHERAVADGVGLCDVLSLVKKFRQSNDTTAIVLMGYLNPIEAFGYQAFANAASESAVDGVLVVDMPPEEAHDLKRSLDDVNIDLIFLVALTTTDERLAFLATIASGFIYFISLKGVTGAEHLDVDLVKMYLLRVRKMINLPIGVGFGIKNAKSAKAVSKYADAVIVGSLLVAFVEQYANDRNKMLANVGYFADEISTAIK</sequence>
<protein>
    <recommendedName>
        <fullName evidence="1">Tryptophan synthase alpha chain</fullName>
        <ecNumber evidence="1">4.2.1.20</ecNumber>
    </recommendedName>
</protein>
<accession>A1AXS3</accession>